<evidence type="ECO:0000250" key="1">
    <source>
        <dbReference type="UniProtKB" id="P04853"/>
    </source>
</evidence>
<evidence type="ECO:0000250" key="2">
    <source>
        <dbReference type="UniProtKB" id="P19762"/>
    </source>
</evidence>
<evidence type="ECO:0000250" key="3">
    <source>
        <dbReference type="UniProtKB" id="Q786F2"/>
    </source>
</evidence>
<evidence type="ECO:0000250" key="4">
    <source>
        <dbReference type="UniProtKB" id="Q8QV65"/>
    </source>
</evidence>
<evidence type="ECO:0000250" key="5">
    <source>
        <dbReference type="UniProtKB" id="Q91UL0"/>
    </source>
</evidence>
<evidence type="ECO:0000250" key="6">
    <source>
        <dbReference type="UniProtKB" id="Q9WAF5"/>
    </source>
</evidence>
<evidence type="ECO:0000255" key="7"/>
<evidence type="ECO:0000305" key="8"/>
<name>HN_MUMPR</name>
<proteinExistence type="evidence at transcript level"/>
<keyword id="KW-1015">Disulfide bond</keyword>
<keyword id="KW-0325">Glycoprotein</keyword>
<keyword id="KW-0348">Hemagglutinin</keyword>
<keyword id="KW-1032">Host cell membrane</keyword>
<keyword id="KW-1043">Host membrane</keyword>
<keyword id="KW-0945">Host-virus interaction</keyword>
<keyword id="KW-0378">Hydrolase</keyword>
<keyword id="KW-0472">Membrane</keyword>
<keyword id="KW-0735">Signal-anchor</keyword>
<keyword id="KW-0812">Transmembrane</keyword>
<keyword id="KW-1133">Transmembrane helix</keyword>
<keyword id="KW-1161">Viral attachment to host cell</keyword>
<keyword id="KW-0261">Viral envelope protein</keyword>
<keyword id="KW-0946">Virion</keyword>
<keyword id="KW-1160">Virus entry into host cell</keyword>
<protein>
    <recommendedName>
        <fullName>Hemagglutinin-neuraminidase</fullName>
        <ecNumber evidence="6">3.2.1.18</ecNumber>
    </recommendedName>
</protein>
<gene>
    <name type="primary">HN</name>
</gene>
<reference key="1">
    <citation type="journal article" date="1988" name="Virology">
        <title>Sequence determination of the mumps virus HN gene.</title>
        <authorList>
            <person name="Waxham M.N."/>
            <person name="Aronowski J."/>
            <person name="Server A.C."/>
            <person name="Wolinsky J.S."/>
            <person name="Smith J.A."/>
            <person name="Goodman H.M."/>
        </authorList>
    </citation>
    <scope>NUCLEOTIDE SEQUENCE [MRNA]</scope>
</reference>
<reference key="2">
    <citation type="journal article" date="2022" name="Viruses">
        <title>Exploring the Mumps Virus Glycoproteins: A Review.</title>
        <authorList>
            <person name="Frost J.R."/>
            <person name="Shaikh S."/>
            <person name="Severini A."/>
        </authorList>
    </citation>
    <scope>REVIEW</scope>
    <scope>FUNCTION</scope>
</reference>
<dbReference type="EC" id="3.2.1.18" evidence="6"/>
<dbReference type="EMBL" id="M19933">
    <property type="protein sequence ID" value="AAA46609.1"/>
    <property type="molecule type" value="mRNA"/>
</dbReference>
<dbReference type="PIR" id="A28917">
    <property type="entry name" value="HNNZMP"/>
</dbReference>
<dbReference type="SMR" id="P10866"/>
<dbReference type="CAZy" id="GH83">
    <property type="family name" value="Glycoside Hydrolase Family 83"/>
</dbReference>
<dbReference type="GlyCosmos" id="P10866">
    <property type="glycosylation" value="6 sites, No reported glycans"/>
</dbReference>
<dbReference type="GO" id="GO:0020002">
    <property type="term" value="C:host cell plasma membrane"/>
    <property type="evidence" value="ECO:0007669"/>
    <property type="project" value="UniProtKB-SubCell"/>
</dbReference>
<dbReference type="GO" id="GO:0016020">
    <property type="term" value="C:membrane"/>
    <property type="evidence" value="ECO:0007669"/>
    <property type="project" value="UniProtKB-KW"/>
</dbReference>
<dbReference type="GO" id="GO:0019031">
    <property type="term" value="C:viral envelope"/>
    <property type="evidence" value="ECO:0007669"/>
    <property type="project" value="UniProtKB-KW"/>
</dbReference>
<dbReference type="GO" id="GO:0055036">
    <property type="term" value="C:virion membrane"/>
    <property type="evidence" value="ECO:0007669"/>
    <property type="project" value="UniProtKB-SubCell"/>
</dbReference>
<dbReference type="GO" id="GO:0004308">
    <property type="term" value="F:exo-alpha-sialidase activity"/>
    <property type="evidence" value="ECO:0007669"/>
    <property type="project" value="UniProtKB-EC"/>
</dbReference>
<dbReference type="GO" id="GO:0046789">
    <property type="term" value="F:host cell surface receptor binding"/>
    <property type="evidence" value="ECO:0007669"/>
    <property type="project" value="InterPro"/>
</dbReference>
<dbReference type="GO" id="GO:0046718">
    <property type="term" value="P:symbiont entry into host cell"/>
    <property type="evidence" value="ECO:0007669"/>
    <property type="project" value="UniProtKB-KW"/>
</dbReference>
<dbReference type="GO" id="GO:0019062">
    <property type="term" value="P:virion attachment to host cell"/>
    <property type="evidence" value="ECO:0007669"/>
    <property type="project" value="UniProtKB-KW"/>
</dbReference>
<dbReference type="CDD" id="cd15469">
    <property type="entry name" value="HN"/>
    <property type="match status" value="1"/>
</dbReference>
<dbReference type="FunFam" id="2.120.10.10:FF:000004">
    <property type="entry name" value="Hemagglutinin-neuraminidase"/>
    <property type="match status" value="1"/>
</dbReference>
<dbReference type="Gene3D" id="1.20.5.110">
    <property type="match status" value="1"/>
</dbReference>
<dbReference type="Gene3D" id="2.120.10.10">
    <property type="match status" value="1"/>
</dbReference>
<dbReference type="InterPro" id="IPR016285">
    <property type="entry name" value="Hemagglutn-neuramid"/>
</dbReference>
<dbReference type="InterPro" id="IPR000665">
    <property type="entry name" value="Hemagglutn/HN"/>
</dbReference>
<dbReference type="InterPro" id="IPR036278">
    <property type="entry name" value="Sialidase_sf"/>
</dbReference>
<dbReference type="Pfam" id="PF00423">
    <property type="entry name" value="HN"/>
    <property type="match status" value="1"/>
</dbReference>
<dbReference type="PIRSF" id="PIRSF001072">
    <property type="entry name" value="Hemagglut-neuramid_paramyxoV"/>
    <property type="match status" value="1"/>
</dbReference>
<dbReference type="SUPFAM" id="SSF50939">
    <property type="entry name" value="Sialidases"/>
    <property type="match status" value="1"/>
</dbReference>
<accession>P10866</accession>
<organism>
    <name type="scientific">Mumps virus (strain RW)</name>
    <name type="common">MuV</name>
    <dbReference type="NCBI Taxonomy" id="11172"/>
    <lineage>
        <taxon>Viruses</taxon>
        <taxon>Riboviria</taxon>
        <taxon>Orthornavirae</taxon>
        <taxon>Negarnaviricota</taxon>
        <taxon>Haploviricotina</taxon>
        <taxon>Monjiviricetes</taxon>
        <taxon>Mononegavirales</taxon>
        <taxon>Paramyxoviridae</taxon>
        <taxon>Rubulavirinae</taxon>
        <taxon>Orthorubulavirus</taxon>
        <taxon>Orthorubulavirus parotitidis</taxon>
        <taxon>Mumps orthorubulavirus</taxon>
    </lineage>
</organism>
<comment type="function">
    <text evidence="2 3 6">Attaches the virus to alpha-2,3-linked sialic acid-containing cell receptors and thereby initiating infection (By similarity). Binding of HN protein to the receptor induces a conformational change that allows the F protein to trigger virion/cell membranes fusion (By similarity). Binds to the glycan motifs sialyl Lewis (SLe) and GM2 ganglioside (GM2-glycan) (By similarity).</text>
</comment>
<comment type="function">
    <text evidence="5">Neuraminidase activity ensures the efficient spread of the virus by dissociating the mature virions from the neuraminic acid containing glycoproteins.</text>
</comment>
<comment type="catalytic activity">
    <reaction evidence="6">
        <text>Hydrolysis of alpha-(2-&gt;3)-, alpha-(2-&gt;6)-, alpha-(2-&gt;8)- glycosidic linkages of terminal sialic acid residues in oligosaccharides, glycoproteins, glycolipids, colominic acid and synthetic substrates.</text>
        <dbReference type="EC" id="3.2.1.18"/>
    </reaction>
</comment>
<comment type="subunit">
    <text evidence="1 6">Homotetramer; composed of disulfide-linked homodimers (By similarity). Interacts with F protein trimer (By similarity).</text>
</comment>
<comment type="subcellular location">
    <subcellularLocation>
        <location evidence="4">Virion membrane</location>
        <topology evidence="8">Single-pass type II membrane protein</topology>
    </subcellularLocation>
    <subcellularLocation>
        <location evidence="8">Host cell membrane</location>
        <topology evidence="8">Single-pass type II membrane protein</topology>
    </subcellularLocation>
</comment>
<comment type="domain">
    <text evidence="6">The C-terminus (head domain) is involved in binding the cellular receptor.</text>
</comment>
<comment type="similarity">
    <text evidence="8">Belongs to the paramyxoviruses hemagglutinin-neuraminidase family.</text>
</comment>
<organismHost>
    <name type="scientific">Homo sapiens</name>
    <name type="common">Human</name>
    <dbReference type="NCBI Taxonomy" id="9606"/>
</organismHost>
<feature type="chain" id="PRO_0000142604" description="Hemagglutinin-neuraminidase">
    <location>
        <begin position="1"/>
        <end position="582"/>
    </location>
</feature>
<feature type="topological domain" description="Intravirion" evidence="7">
    <location>
        <begin position="1"/>
        <end position="34"/>
    </location>
</feature>
<feature type="transmembrane region" description="Helical; Signal-anchor for type II membrane protein" evidence="7">
    <location>
        <begin position="35"/>
        <end position="55"/>
    </location>
</feature>
<feature type="topological domain" description="Virion surface" evidence="7">
    <location>
        <begin position="56"/>
        <end position="582"/>
    </location>
</feature>
<feature type="region of interest" description="Involved in neuraminidase activity" evidence="5">
    <location>
        <begin position="240"/>
        <end position="245"/>
    </location>
</feature>
<feature type="site" description="Binding to the glycan motifs of the host receptor" evidence="6">
    <location>
        <position position="180"/>
    </location>
</feature>
<feature type="site" description="Binding to the glycan motifs of the host receptor" evidence="6">
    <location>
        <position position="242"/>
    </location>
</feature>
<feature type="site" description="Binding to the glycan motifs of the host receptor" evidence="6">
    <location>
        <position position="264"/>
    </location>
</feature>
<feature type="site" description="Binding to the glycan motifs of the host receptor" evidence="6">
    <location>
        <position position="323"/>
    </location>
</feature>
<feature type="site" description="Binding to the glycan motifs of the host receptor" evidence="6">
    <location>
        <position position="369"/>
    </location>
</feature>
<feature type="site" description="Binding to the glycan motifs of the host receptor" evidence="6">
    <location>
        <position position="407"/>
    </location>
</feature>
<feature type="site" description="Binding to the glycan motifs of the host receptor" evidence="6">
    <location>
        <position position="422"/>
    </location>
</feature>
<feature type="site" description="Binding to the host receptor" evidence="6">
    <location>
        <position position="512"/>
    </location>
</feature>
<feature type="site" description="Binding to the glycan motifs of the glycan motifs of the host receptor" evidence="6">
    <location>
        <position position="540"/>
    </location>
</feature>
<feature type="glycosylation site" description="N-linked (GlcNAc...) asparagine; by host" evidence="6">
    <location>
        <position position="127"/>
    </location>
</feature>
<feature type="glycosylation site" description="N-linked (GlcNAc...) asparagine; by host" evidence="6">
    <location>
        <position position="284"/>
    </location>
</feature>
<feature type="glycosylation site" description="N-linked (GlcNAc...) asparagine; by host" evidence="6">
    <location>
        <position position="329"/>
    </location>
</feature>
<feature type="glycosylation site" description="N-linked (GlcNAc...) asparagine; by host" evidence="6">
    <location>
        <position position="400"/>
    </location>
</feature>
<feature type="glycosylation site" description="N-linked (GlcNAc...) asparagine; by host" evidence="6">
    <location>
        <position position="448"/>
    </location>
</feature>
<feature type="glycosylation site" description="N-linked (GlcNAc...) asparagine; by host" evidence="6">
    <location>
        <position position="507"/>
    </location>
</feature>
<feature type="disulfide bond" evidence="6">
    <location>
        <begin position="178"/>
        <end position="202"/>
    </location>
</feature>
<feature type="disulfide bond" evidence="6">
    <location>
        <begin position="192"/>
        <end position="253"/>
    </location>
</feature>
<feature type="disulfide bond" evidence="6">
    <location>
        <begin position="244"/>
        <end position="257"/>
    </location>
</feature>
<feature type="disulfide bond" evidence="6">
    <location>
        <begin position="350"/>
        <end position="471"/>
    </location>
</feature>
<feature type="disulfide bond" evidence="6">
    <location>
        <begin position="382"/>
        <end position="392"/>
    </location>
</feature>
<feature type="disulfide bond" evidence="6">
    <location>
        <begin position="465"/>
        <end position="475"/>
    </location>
</feature>
<feature type="disulfide bond" evidence="6">
    <location>
        <begin position="545"/>
        <end position="556"/>
    </location>
</feature>
<sequence length="582" mass="64045">MEPSKLFTISDNATFAPGPVNNAADKKTFRTCFRILVLSVQAVTLILVIVTLGELVRMINDQGLSNQLSSITDKIRESATMIASAVGVMNQVIHGVTVSLPLQIEGNQNQLLSTLATICTSKKQISNCSTNIPLVNDLRFINGINKFIIEDYANHDFSIGHPLNMPSFIPTATSPNGCTRIPSFSLGKTHWCYTHNVINANCKDHTSSNQYVSMGILVQTASGYPMFKTLKIQYLSDGLNRKSCSIATVPDGCAMYCYVSTQLETDDYAGSSPPTQKLTLLFYNDTVTERTISPSGLEGNWATLVPGVGSGIYFENKLIFPAYGGVLPNSTLGVKLAREFFRPVNPYNPCSGPQQDLDQRALRSYFPSYLSNRRVQSAFLVCAWNQILVTNCELVVPSNNQTLMGAEGRVLLINNRLLYYQRSTSWWPYELLYEISFTFTNSGQSSVNMSWIPIYSFTRPGSGKCSGENVCPIACVSGVYLDPWPLTPYSHQSGINRNFYFTGALLNSSTTRVNPTLYVSALNNLKVLAPYGTQGLSASYTTTTCFQDTGDASVYCVYIMELASNIVGEFQILPVLTRLTIT</sequence>